<dbReference type="EC" id="2.7.7.-" evidence="1"/>
<dbReference type="EMBL" id="X06627">
    <property type="protein sequence ID" value="CAA29839.1"/>
    <property type="molecule type" value="Genomic_DNA"/>
</dbReference>
<dbReference type="PIR" id="S00938">
    <property type="entry name" value="S00938"/>
</dbReference>
<dbReference type="RefSeq" id="NP_976271.1">
    <property type="nucleotide sequence ID" value="NC_005564.1"/>
</dbReference>
<dbReference type="RefSeq" id="WP_001258486.1">
    <property type="nucleotide sequence ID" value="NZ_WNWJ01000020.1"/>
</dbReference>
<dbReference type="SMR" id="P12055"/>
<dbReference type="PRO" id="PR:P12055"/>
<dbReference type="GO" id="GO:0016740">
    <property type="term" value="F:transferase activity"/>
    <property type="evidence" value="ECO:0007669"/>
    <property type="project" value="UniProtKB-KW"/>
</dbReference>
<dbReference type="GO" id="GO:0046677">
    <property type="term" value="P:response to antibiotic"/>
    <property type="evidence" value="ECO:0007669"/>
    <property type="project" value="UniProtKB-KW"/>
</dbReference>
<dbReference type="Gene3D" id="3.30.460.10">
    <property type="entry name" value="Beta Polymerase, domain 2"/>
    <property type="match status" value="1"/>
</dbReference>
<dbReference type="Gene3D" id="1.20.120.330">
    <property type="entry name" value="Nucleotidyltransferases domain 2"/>
    <property type="match status" value="1"/>
</dbReference>
<dbReference type="InterPro" id="IPR007530">
    <property type="entry name" value="Aminoglycoside_adenylylTfrase"/>
</dbReference>
<dbReference type="InterPro" id="IPR043519">
    <property type="entry name" value="NT_sf"/>
</dbReference>
<dbReference type="NCBIfam" id="NF033084">
    <property type="entry name" value="ANT_6"/>
    <property type="match status" value="1"/>
</dbReference>
<dbReference type="NCBIfam" id="NF000062">
    <property type="entry name" value="ANT_6_str"/>
    <property type="match status" value="1"/>
</dbReference>
<dbReference type="Pfam" id="PF04439">
    <property type="entry name" value="Adenyl_transf"/>
    <property type="match status" value="1"/>
</dbReference>
<dbReference type="PIRSF" id="PIRSF000812">
    <property type="entry name" value="AAD"/>
    <property type="match status" value="1"/>
</dbReference>
<dbReference type="SUPFAM" id="SSF81301">
    <property type="entry name" value="Nucleotidyltransferase"/>
    <property type="match status" value="1"/>
</dbReference>
<dbReference type="SUPFAM" id="SSF81631">
    <property type="entry name" value="PAP/OAS1 substrate-binding domain"/>
    <property type="match status" value="1"/>
</dbReference>
<keyword id="KW-0046">Antibiotic resistance</keyword>
<keyword id="KW-0614">Plasmid</keyword>
<keyword id="KW-0808">Transferase</keyword>
<comment type="function">
    <text evidence="1 2">Required for streptomycin resistance (PubMed:3357770). Adenylates streptomycin on the O-6 residue (By similarity).</text>
</comment>
<comment type="catalytic activity">
    <reaction evidence="1">
        <text>streptomycin + ATP = 6-O-adenylylstreptomycin + diphosphate</text>
        <dbReference type="Rhea" id="RHEA:63236"/>
        <dbReference type="ChEBI" id="CHEBI:30616"/>
        <dbReference type="ChEBI" id="CHEBI:33019"/>
        <dbReference type="ChEBI" id="CHEBI:58007"/>
        <dbReference type="ChEBI" id="CHEBI:146262"/>
    </reaction>
</comment>
<accession>P12055</accession>
<gene>
    <name evidence="3" type="primary">str</name>
    <name evidence="4" type="synonym">aadK</name>
</gene>
<geneLocation type="plasmid">
    <name>pS194</name>
</geneLocation>
<proteinExistence type="inferred from homology"/>
<name>AADK_STAAU</name>
<protein>
    <recommendedName>
        <fullName evidence="1">Aminoglycoside 6-adenylyltransferase</fullName>
        <ecNumber evidence="1">2.7.7.-</ecNumber>
    </recommendedName>
    <alternativeName>
        <fullName evidence="1">AAD(6)</fullName>
    </alternativeName>
    <alternativeName>
        <fullName evidence="1">Streptomycin 6-adenylyltransferase</fullName>
    </alternativeName>
</protein>
<feature type="chain" id="PRO_0000068589" description="Aminoglycoside 6-adenylyltransferase">
    <location>
        <begin position="1"/>
        <end position="282"/>
    </location>
</feature>
<sequence>MRTEKEILNLVSEFAYQRSNVKIIALEGSRTNENIKKDKFQDYDFAFFVSDIEYFTHEESWLSLFGELLFIQKPEDMELFPPDLDYGYSYIMYFKDGIKMDITLINLKDLNRYFSDSDGLVKILVDKDNLVTQEIVPDDSNYWLKKPTEREFYDCCNEFWSVSTYVAKGVFRREILFALDHFNNILRPELLRMISWYIGFNRGFDFSLGKNYKFINKYLTDKEFNMLLATFEMNGYRKTYQSFKLCCELFKYYSNKVSCLGNYNYPNYEKNIENFIRNNYEN</sequence>
<organism>
    <name type="scientific">Staphylococcus aureus</name>
    <dbReference type="NCBI Taxonomy" id="1280"/>
    <lineage>
        <taxon>Bacteria</taxon>
        <taxon>Bacillati</taxon>
        <taxon>Bacillota</taxon>
        <taxon>Bacilli</taxon>
        <taxon>Bacillales</taxon>
        <taxon>Staphylococcaceae</taxon>
        <taxon>Staphylococcus</taxon>
    </lineage>
</organism>
<evidence type="ECO:0000250" key="1">
    <source>
        <dbReference type="UniProtKB" id="P17585"/>
    </source>
</evidence>
<evidence type="ECO:0000269" key="2">
    <source>
    </source>
</evidence>
<evidence type="ECO:0000303" key="3">
    <source>
    </source>
</evidence>
<evidence type="ECO:0000305" key="4"/>
<reference key="1">
    <citation type="journal article" date="1988" name="Nucleic Acids Res.">
        <title>Nucleotide sequence of pS194, a streptomycin-resistance plasmid from Staphylococcus aureus.</title>
        <authorList>
            <person name="Projan S.J."/>
            <person name="Moghazeh S."/>
            <person name="Novick R.P."/>
        </authorList>
    </citation>
    <scope>NUCLEOTIDE SEQUENCE [GENOMIC DNA]</scope>
</reference>